<keyword id="KW-0067">ATP-binding</keyword>
<keyword id="KW-0133">Cell shape</keyword>
<keyword id="KW-0961">Cell wall biogenesis/degradation</keyword>
<keyword id="KW-0963">Cytoplasm</keyword>
<keyword id="KW-0436">Ligase</keyword>
<keyword id="KW-0460">Magnesium</keyword>
<keyword id="KW-0464">Manganese</keyword>
<keyword id="KW-0479">Metal-binding</keyword>
<keyword id="KW-0547">Nucleotide-binding</keyword>
<keyword id="KW-0573">Peptidoglycan synthesis</keyword>
<keyword id="KW-1185">Reference proteome</keyword>
<accession>Q3J792</accession>
<reference key="1">
    <citation type="journal article" date="2006" name="Appl. Environ. Microbiol.">
        <title>Complete genome sequence of the marine, chemolithoautotrophic, ammonia-oxidizing bacterium Nitrosococcus oceani ATCC 19707.</title>
        <authorList>
            <person name="Klotz M.G."/>
            <person name="Arp D.J."/>
            <person name="Chain P.S.G."/>
            <person name="El-Sheikh A.F."/>
            <person name="Hauser L.J."/>
            <person name="Hommes N.G."/>
            <person name="Larimer F.W."/>
            <person name="Malfatti S.A."/>
            <person name="Norton J.M."/>
            <person name="Poret-Peterson A.T."/>
            <person name="Vergez L.M."/>
            <person name="Ward B.B."/>
        </authorList>
    </citation>
    <scope>NUCLEOTIDE SEQUENCE [LARGE SCALE GENOMIC DNA]</scope>
    <source>
        <strain>ATCC 19707 / BCRC 17464 / JCM 30415 / NCIMB 11848 / C-107</strain>
    </source>
</reference>
<proteinExistence type="inferred from homology"/>
<name>DDL_NITOC</name>
<organism>
    <name type="scientific">Nitrosococcus oceani (strain ATCC 19707 / BCRC 17464 / JCM 30415 / NCIMB 11848 / C-107)</name>
    <dbReference type="NCBI Taxonomy" id="323261"/>
    <lineage>
        <taxon>Bacteria</taxon>
        <taxon>Pseudomonadati</taxon>
        <taxon>Pseudomonadota</taxon>
        <taxon>Gammaproteobacteria</taxon>
        <taxon>Chromatiales</taxon>
        <taxon>Chromatiaceae</taxon>
        <taxon>Nitrosococcus</taxon>
    </lineage>
</organism>
<gene>
    <name evidence="2" type="primary">ddl</name>
    <name type="ordered locus">Noc_2858</name>
</gene>
<feature type="chain" id="PRO_0000341138" description="D-alanine--D-alanine ligase">
    <location>
        <begin position="1"/>
        <end position="316"/>
    </location>
</feature>
<feature type="domain" description="ATP-grasp" evidence="2">
    <location>
        <begin position="109"/>
        <end position="304"/>
    </location>
</feature>
<feature type="binding site" evidence="2">
    <location>
        <begin position="135"/>
        <end position="190"/>
    </location>
    <ligand>
        <name>ATP</name>
        <dbReference type="ChEBI" id="CHEBI:30616"/>
    </ligand>
</feature>
<feature type="binding site" evidence="2">
    <location>
        <position position="258"/>
    </location>
    <ligand>
        <name>Mg(2+)</name>
        <dbReference type="ChEBI" id="CHEBI:18420"/>
        <label>1</label>
    </ligand>
</feature>
<feature type="binding site" evidence="2">
    <location>
        <position position="271"/>
    </location>
    <ligand>
        <name>Mg(2+)</name>
        <dbReference type="ChEBI" id="CHEBI:18420"/>
        <label>1</label>
    </ligand>
</feature>
<feature type="binding site" evidence="2">
    <location>
        <position position="271"/>
    </location>
    <ligand>
        <name>Mg(2+)</name>
        <dbReference type="ChEBI" id="CHEBI:18420"/>
        <label>2</label>
    </ligand>
</feature>
<feature type="binding site" evidence="2">
    <location>
        <position position="273"/>
    </location>
    <ligand>
        <name>Mg(2+)</name>
        <dbReference type="ChEBI" id="CHEBI:18420"/>
        <label>2</label>
    </ligand>
</feature>
<protein>
    <recommendedName>
        <fullName evidence="2">D-alanine--D-alanine ligase</fullName>
        <ecNumber evidence="2">6.3.2.4</ecNumber>
    </recommendedName>
    <alternativeName>
        <fullName evidence="2">D-Ala-D-Ala ligase</fullName>
    </alternativeName>
    <alternativeName>
        <fullName evidence="2">D-alanylalanine synthetase</fullName>
    </alternativeName>
</protein>
<dbReference type="EC" id="6.3.2.4" evidence="2"/>
<dbReference type="EMBL" id="CP000127">
    <property type="protein sequence ID" value="ABA59304.1"/>
    <property type="molecule type" value="Genomic_DNA"/>
</dbReference>
<dbReference type="RefSeq" id="WP_002812557.1">
    <property type="nucleotide sequence ID" value="NC_007484.1"/>
</dbReference>
<dbReference type="SMR" id="Q3J792"/>
<dbReference type="FunCoup" id="Q3J792">
    <property type="interactions" value="293"/>
</dbReference>
<dbReference type="STRING" id="323261.Noc_2858"/>
<dbReference type="KEGG" id="noc:Noc_2858"/>
<dbReference type="eggNOG" id="COG1181">
    <property type="taxonomic scope" value="Bacteria"/>
</dbReference>
<dbReference type="HOGENOM" id="CLU_039268_1_2_6"/>
<dbReference type="InParanoid" id="Q3J792"/>
<dbReference type="UniPathway" id="UPA00219"/>
<dbReference type="Proteomes" id="UP000006838">
    <property type="component" value="Chromosome"/>
</dbReference>
<dbReference type="GO" id="GO:0005829">
    <property type="term" value="C:cytosol"/>
    <property type="evidence" value="ECO:0007669"/>
    <property type="project" value="TreeGrafter"/>
</dbReference>
<dbReference type="GO" id="GO:0005524">
    <property type="term" value="F:ATP binding"/>
    <property type="evidence" value="ECO:0007669"/>
    <property type="project" value="UniProtKB-KW"/>
</dbReference>
<dbReference type="GO" id="GO:0008716">
    <property type="term" value="F:D-alanine-D-alanine ligase activity"/>
    <property type="evidence" value="ECO:0007669"/>
    <property type="project" value="UniProtKB-UniRule"/>
</dbReference>
<dbReference type="GO" id="GO:0046872">
    <property type="term" value="F:metal ion binding"/>
    <property type="evidence" value="ECO:0007669"/>
    <property type="project" value="UniProtKB-KW"/>
</dbReference>
<dbReference type="GO" id="GO:0071555">
    <property type="term" value="P:cell wall organization"/>
    <property type="evidence" value="ECO:0007669"/>
    <property type="project" value="UniProtKB-KW"/>
</dbReference>
<dbReference type="GO" id="GO:0009252">
    <property type="term" value="P:peptidoglycan biosynthetic process"/>
    <property type="evidence" value="ECO:0007669"/>
    <property type="project" value="UniProtKB-UniRule"/>
</dbReference>
<dbReference type="GO" id="GO:0008360">
    <property type="term" value="P:regulation of cell shape"/>
    <property type="evidence" value="ECO:0007669"/>
    <property type="project" value="UniProtKB-KW"/>
</dbReference>
<dbReference type="FunFam" id="3.30.470.20:FF:000008">
    <property type="entry name" value="D-alanine--D-alanine ligase"/>
    <property type="match status" value="1"/>
</dbReference>
<dbReference type="Gene3D" id="3.40.50.20">
    <property type="match status" value="1"/>
</dbReference>
<dbReference type="Gene3D" id="3.30.1490.20">
    <property type="entry name" value="ATP-grasp fold, A domain"/>
    <property type="match status" value="1"/>
</dbReference>
<dbReference type="Gene3D" id="3.30.470.20">
    <property type="entry name" value="ATP-grasp fold, B domain"/>
    <property type="match status" value="1"/>
</dbReference>
<dbReference type="HAMAP" id="MF_00047">
    <property type="entry name" value="Dala_Dala_lig"/>
    <property type="match status" value="1"/>
</dbReference>
<dbReference type="InterPro" id="IPR011761">
    <property type="entry name" value="ATP-grasp"/>
</dbReference>
<dbReference type="InterPro" id="IPR013815">
    <property type="entry name" value="ATP_grasp_subdomain_1"/>
</dbReference>
<dbReference type="InterPro" id="IPR000291">
    <property type="entry name" value="D-Ala_lig_Van_CS"/>
</dbReference>
<dbReference type="InterPro" id="IPR005905">
    <property type="entry name" value="D_ala_D_ala"/>
</dbReference>
<dbReference type="InterPro" id="IPR011095">
    <property type="entry name" value="Dala_Dala_lig_C"/>
</dbReference>
<dbReference type="InterPro" id="IPR011127">
    <property type="entry name" value="Dala_Dala_lig_N"/>
</dbReference>
<dbReference type="InterPro" id="IPR016185">
    <property type="entry name" value="PreATP-grasp_dom_sf"/>
</dbReference>
<dbReference type="NCBIfam" id="TIGR01205">
    <property type="entry name" value="D_ala_D_alaTIGR"/>
    <property type="match status" value="1"/>
</dbReference>
<dbReference type="NCBIfam" id="NF002378">
    <property type="entry name" value="PRK01372.1"/>
    <property type="match status" value="1"/>
</dbReference>
<dbReference type="PANTHER" id="PTHR23132">
    <property type="entry name" value="D-ALANINE--D-ALANINE LIGASE"/>
    <property type="match status" value="1"/>
</dbReference>
<dbReference type="PANTHER" id="PTHR23132:SF23">
    <property type="entry name" value="D-ALANINE--D-ALANINE LIGASE B"/>
    <property type="match status" value="1"/>
</dbReference>
<dbReference type="Pfam" id="PF07478">
    <property type="entry name" value="Dala_Dala_lig_C"/>
    <property type="match status" value="1"/>
</dbReference>
<dbReference type="Pfam" id="PF01820">
    <property type="entry name" value="Dala_Dala_lig_N"/>
    <property type="match status" value="1"/>
</dbReference>
<dbReference type="PIRSF" id="PIRSF039102">
    <property type="entry name" value="Ddl/VanB"/>
    <property type="match status" value="1"/>
</dbReference>
<dbReference type="SUPFAM" id="SSF56059">
    <property type="entry name" value="Glutathione synthetase ATP-binding domain-like"/>
    <property type="match status" value="1"/>
</dbReference>
<dbReference type="SUPFAM" id="SSF52440">
    <property type="entry name" value="PreATP-grasp domain"/>
    <property type="match status" value="1"/>
</dbReference>
<dbReference type="PROSITE" id="PS50975">
    <property type="entry name" value="ATP_GRASP"/>
    <property type="match status" value="1"/>
</dbReference>
<dbReference type="PROSITE" id="PS00843">
    <property type="entry name" value="DALA_DALA_LIGASE_1"/>
    <property type="match status" value="1"/>
</dbReference>
<dbReference type="PROSITE" id="PS00844">
    <property type="entry name" value="DALA_DALA_LIGASE_2"/>
    <property type="match status" value="1"/>
</dbReference>
<comment type="function">
    <text evidence="2">Cell wall formation.</text>
</comment>
<comment type="catalytic activity">
    <reaction evidence="2">
        <text>2 D-alanine + ATP = D-alanyl-D-alanine + ADP + phosphate + H(+)</text>
        <dbReference type="Rhea" id="RHEA:11224"/>
        <dbReference type="ChEBI" id="CHEBI:15378"/>
        <dbReference type="ChEBI" id="CHEBI:30616"/>
        <dbReference type="ChEBI" id="CHEBI:43474"/>
        <dbReference type="ChEBI" id="CHEBI:57416"/>
        <dbReference type="ChEBI" id="CHEBI:57822"/>
        <dbReference type="ChEBI" id="CHEBI:456216"/>
        <dbReference type="EC" id="6.3.2.4"/>
    </reaction>
</comment>
<comment type="cofactor">
    <cofactor evidence="1">
        <name>Mg(2+)</name>
        <dbReference type="ChEBI" id="CHEBI:18420"/>
    </cofactor>
    <cofactor evidence="1">
        <name>Mn(2+)</name>
        <dbReference type="ChEBI" id="CHEBI:29035"/>
    </cofactor>
    <text evidence="1">Binds 2 magnesium or manganese ions per subunit.</text>
</comment>
<comment type="pathway">
    <text evidence="2">Cell wall biogenesis; peptidoglycan biosynthesis.</text>
</comment>
<comment type="subcellular location">
    <subcellularLocation>
        <location evidence="2">Cytoplasm</location>
    </subcellularLocation>
</comment>
<comment type="similarity">
    <text evidence="2">Belongs to the D-alanine--D-alanine ligase family.</text>
</comment>
<evidence type="ECO:0000250" key="1"/>
<evidence type="ECO:0000255" key="2">
    <source>
        <dbReference type="HAMAP-Rule" id="MF_00047"/>
    </source>
</evidence>
<sequence length="316" mass="34489">MIGRVDVKAWGKVVVLMGGYSAEREISLKSGTAVLQSLLRQGIEAHGIDVDKGVLTQLSKGQFTRAFIALHGRGGEDGVIQGVLETLNLPYTGSGVLGSALTMDKLRSKRLWRGMDLPTADFSVLTRDTNPALIAADLGLPLIVKPAREGSSLGMMKVESIEALQSAYREAVIFDTAVFAERWLPGAEYTAAILADRVLPLIRLETPRVFYDFEAKYHANTTRYFCPCGLSEKQEQDLQALALEAFQALGASGWGRVDLRCDEKAHPYLLEINTVPGMTDHSLVPMAAQAAGIEFDEMVLQILASSLERRMFQDGT</sequence>